<comment type="subunit">
    <text evidence="1">Part of the 50S ribosomal subunit.</text>
</comment>
<comment type="similarity">
    <text evidence="1">Belongs to the bacterial ribosomal protein bL31 family. Type B subfamily.</text>
</comment>
<accession>B7GU90</accession>
<accession>E8MM42</accession>
<sequence length="85" mass="9604">MQEGIHPEYGPVVFYDRSADKYFLTKSTLVAKAVNLPTIDWEDGNTYPLVNVEVSSYSHPFYTGKNVVIDAAGQVQKFNARYGRK</sequence>
<dbReference type="EMBL" id="CP001095">
    <property type="protein sequence ID" value="ACJ53036.1"/>
    <property type="molecule type" value="Genomic_DNA"/>
</dbReference>
<dbReference type="EMBL" id="AP010889">
    <property type="protein sequence ID" value="BAJ69619.1"/>
    <property type="molecule type" value="Genomic_DNA"/>
</dbReference>
<dbReference type="RefSeq" id="WP_012578243.1">
    <property type="nucleotide sequence ID" value="NZ_JDTT01000029.1"/>
</dbReference>
<dbReference type="SMR" id="B7GU90"/>
<dbReference type="KEGG" id="bln:Blon_1968"/>
<dbReference type="KEGG" id="blon:BLIJ_2041"/>
<dbReference type="PATRIC" id="fig|391904.8.peg.2048"/>
<dbReference type="HOGENOM" id="CLU_114306_2_2_11"/>
<dbReference type="Proteomes" id="UP000001360">
    <property type="component" value="Chromosome"/>
</dbReference>
<dbReference type="GO" id="GO:1990904">
    <property type="term" value="C:ribonucleoprotein complex"/>
    <property type="evidence" value="ECO:0007669"/>
    <property type="project" value="UniProtKB-KW"/>
</dbReference>
<dbReference type="GO" id="GO:0005840">
    <property type="term" value="C:ribosome"/>
    <property type="evidence" value="ECO:0007669"/>
    <property type="project" value="UniProtKB-KW"/>
</dbReference>
<dbReference type="GO" id="GO:0003735">
    <property type="term" value="F:structural constituent of ribosome"/>
    <property type="evidence" value="ECO:0007669"/>
    <property type="project" value="InterPro"/>
</dbReference>
<dbReference type="GO" id="GO:0006412">
    <property type="term" value="P:translation"/>
    <property type="evidence" value="ECO:0007669"/>
    <property type="project" value="UniProtKB-UniRule"/>
</dbReference>
<dbReference type="Gene3D" id="4.10.830.30">
    <property type="entry name" value="Ribosomal protein L31"/>
    <property type="match status" value="1"/>
</dbReference>
<dbReference type="HAMAP" id="MF_00502">
    <property type="entry name" value="Ribosomal_bL31_2"/>
    <property type="match status" value="1"/>
</dbReference>
<dbReference type="InterPro" id="IPR034704">
    <property type="entry name" value="Ribosomal_bL28/bL31-like_sf"/>
</dbReference>
<dbReference type="InterPro" id="IPR002150">
    <property type="entry name" value="Ribosomal_bL31"/>
</dbReference>
<dbReference type="InterPro" id="IPR027493">
    <property type="entry name" value="Ribosomal_bL31_B"/>
</dbReference>
<dbReference type="InterPro" id="IPR042105">
    <property type="entry name" value="Ribosomal_bL31_sf"/>
</dbReference>
<dbReference type="NCBIfam" id="TIGR00105">
    <property type="entry name" value="L31"/>
    <property type="match status" value="1"/>
</dbReference>
<dbReference type="NCBIfam" id="NF002462">
    <property type="entry name" value="PRK01678.1"/>
    <property type="match status" value="1"/>
</dbReference>
<dbReference type="PANTHER" id="PTHR33280">
    <property type="entry name" value="50S RIBOSOMAL PROTEIN L31, CHLOROPLASTIC"/>
    <property type="match status" value="1"/>
</dbReference>
<dbReference type="PANTHER" id="PTHR33280:SF1">
    <property type="entry name" value="LARGE RIBOSOMAL SUBUNIT PROTEIN BL31C"/>
    <property type="match status" value="1"/>
</dbReference>
<dbReference type="Pfam" id="PF01197">
    <property type="entry name" value="Ribosomal_L31"/>
    <property type="match status" value="1"/>
</dbReference>
<dbReference type="SUPFAM" id="SSF143800">
    <property type="entry name" value="L28p-like"/>
    <property type="match status" value="1"/>
</dbReference>
<dbReference type="PROSITE" id="PS01143">
    <property type="entry name" value="RIBOSOMAL_L31"/>
    <property type="match status" value="1"/>
</dbReference>
<name>RL31B_BIFLS</name>
<reference key="1">
    <citation type="journal article" date="2008" name="Proc. Natl. Acad. Sci. U.S.A.">
        <title>The genome sequence of Bifidobacterium longum subsp. infantis reveals adaptations for milk utilization within the infant microbiome.</title>
        <authorList>
            <person name="Sela D.A."/>
            <person name="Chapman J."/>
            <person name="Adeuya A."/>
            <person name="Kim J.H."/>
            <person name="Chen F."/>
            <person name="Whitehead T.R."/>
            <person name="Lapidus A."/>
            <person name="Rokhsar D.S."/>
            <person name="Lebrilla C.B."/>
            <person name="German J.B."/>
            <person name="Price N.P."/>
            <person name="Richardson P.M."/>
            <person name="Mills D.A."/>
        </authorList>
    </citation>
    <scope>NUCLEOTIDE SEQUENCE [LARGE SCALE GENOMIC DNA]</scope>
    <source>
        <strain>ATCC 15697 / DSM 20088 / JCM 1222 / NCTC 11817 / S12</strain>
    </source>
</reference>
<reference key="2">
    <citation type="journal article" date="2011" name="Nature">
        <title>Bifidobacteria can protect from enteropathogenic infection through production of acetate.</title>
        <authorList>
            <person name="Fukuda S."/>
            <person name="Toh H."/>
            <person name="Hase K."/>
            <person name="Oshima K."/>
            <person name="Nakanishi Y."/>
            <person name="Yoshimura K."/>
            <person name="Tobe T."/>
            <person name="Clarke J.M."/>
            <person name="Topping D.L."/>
            <person name="Suzuki T."/>
            <person name="Taylor T.D."/>
            <person name="Itoh K."/>
            <person name="Kikuchi J."/>
            <person name="Morita H."/>
            <person name="Hattori M."/>
            <person name="Ohno H."/>
        </authorList>
    </citation>
    <scope>NUCLEOTIDE SEQUENCE [LARGE SCALE GENOMIC DNA]</scope>
    <source>
        <strain>ATCC 15697 / DSM 20088 / JCM 1222 / NCTC 11817 / S12</strain>
    </source>
</reference>
<organism>
    <name type="scientific">Bifidobacterium longum subsp. infantis (strain ATCC 15697 / DSM 20088 / JCM 1222 / NCTC 11817 / S12)</name>
    <dbReference type="NCBI Taxonomy" id="391904"/>
    <lineage>
        <taxon>Bacteria</taxon>
        <taxon>Bacillati</taxon>
        <taxon>Actinomycetota</taxon>
        <taxon>Actinomycetes</taxon>
        <taxon>Bifidobacteriales</taxon>
        <taxon>Bifidobacteriaceae</taxon>
        <taxon>Bifidobacterium</taxon>
    </lineage>
</organism>
<proteinExistence type="inferred from homology"/>
<protein>
    <recommendedName>
        <fullName evidence="1">Large ribosomal subunit protein bL31B</fullName>
    </recommendedName>
    <alternativeName>
        <fullName evidence="2">50S ribosomal protein L31 type B</fullName>
    </alternativeName>
</protein>
<feature type="chain" id="PRO_1000176983" description="Large ribosomal subunit protein bL31B">
    <location>
        <begin position="1"/>
        <end position="85"/>
    </location>
</feature>
<gene>
    <name evidence="1" type="primary">rpmE2</name>
    <name type="ordered locus">Blon_1968</name>
    <name type="ordered locus">BLIJ_2041</name>
</gene>
<keyword id="KW-0687">Ribonucleoprotein</keyword>
<keyword id="KW-0689">Ribosomal protein</keyword>
<evidence type="ECO:0000255" key="1">
    <source>
        <dbReference type="HAMAP-Rule" id="MF_00502"/>
    </source>
</evidence>
<evidence type="ECO:0000305" key="2"/>